<evidence type="ECO:0000255" key="1">
    <source>
        <dbReference type="HAMAP-Rule" id="MF_01147"/>
    </source>
</evidence>
<name>LGT_BRUAB</name>
<accession>Q57BY9</accession>
<dbReference type="EC" id="2.5.1.145" evidence="1"/>
<dbReference type="EMBL" id="AE017223">
    <property type="protein sequence ID" value="AAX74845.1"/>
    <property type="molecule type" value="Genomic_DNA"/>
</dbReference>
<dbReference type="RefSeq" id="WP_002966912.1">
    <property type="nucleotide sequence ID" value="NC_006932.1"/>
</dbReference>
<dbReference type="SMR" id="Q57BY9"/>
<dbReference type="EnsemblBacteria" id="AAX74845">
    <property type="protein sequence ID" value="AAX74845"/>
    <property type="gene ID" value="BruAb1_1517"/>
</dbReference>
<dbReference type="GeneID" id="97533286"/>
<dbReference type="KEGG" id="bmb:BruAb1_1517"/>
<dbReference type="HOGENOM" id="CLU_013386_1_0_5"/>
<dbReference type="UniPathway" id="UPA00664"/>
<dbReference type="Proteomes" id="UP000000540">
    <property type="component" value="Chromosome I"/>
</dbReference>
<dbReference type="GO" id="GO:0005886">
    <property type="term" value="C:plasma membrane"/>
    <property type="evidence" value="ECO:0007669"/>
    <property type="project" value="UniProtKB-SubCell"/>
</dbReference>
<dbReference type="GO" id="GO:0008961">
    <property type="term" value="F:phosphatidylglycerol-prolipoprotein diacylglyceryl transferase activity"/>
    <property type="evidence" value="ECO:0007669"/>
    <property type="project" value="UniProtKB-UniRule"/>
</dbReference>
<dbReference type="GO" id="GO:0042158">
    <property type="term" value="P:lipoprotein biosynthetic process"/>
    <property type="evidence" value="ECO:0007669"/>
    <property type="project" value="UniProtKB-UniRule"/>
</dbReference>
<dbReference type="HAMAP" id="MF_01147">
    <property type="entry name" value="Lgt"/>
    <property type="match status" value="1"/>
</dbReference>
<dbReference type="InterPro" id="IPR001640">
    <property type="entry name" value="Lgt"/>
</dbReference>
<dbReference type="NCBIfam" id="TIGR00544">
    <property type="entry name" value="lgt"/>
    <property type="match status" value="1"/>
</dbReference>
<dbReference type="PANTHER" id="PTHR30589:SF0">
    <property type="entry name" value="PHOSPHATIDYLGLYCEROL--PROLIPOPROTEIN DIACYLGLYCERYL TRANSFERASE"/>
    <property type="match status" value="1"/>
</dbReference>
<dbReference type="PANTHER" id="PTHR30589">
    <property type="entry name" value="PROLIPOPROTEIN DIACYLGLYCERYL TRANSFERASE"/>
    <property type="match status" value="1"/>
</dbReference>
<dbReference type="Pfam" id="PF01790">
    <property type="entry name" value="LGT"/>
    <property type="match status" value="1"/>
</dbReference>
<sequence length="281" mass="31001">MIETLLPASALAFPAIDPVIFRVGPLAVHWYGLGYVVGILFAWWYGKKLLRSHRLWANNQPPMAPEALDDFVIWAALGVVLGGRIGYVLFYNFSYYISNPLAIPALWDGGMSFHGGILGTTLAMILFARSRGILVWSMFDTIAAGVPIGLGVVRVANFINSELWGRVSDVPWAVYFPNGGPLPRHPSQLYEAFLEGLVLFFVLFVLVWGARKLKQPGFVAGAFVTGYGLSRIAVEFFREPDAQIGYLFGGWLTMGMVLSVPMVLLGLWAMWRANRAAARNA</sequence>
<protein>
    <recommendedName>
        <fullName evidence="1">Phosphatidylglycerol--prolipoprotein diacylglyceryl transferase</fullName>
        <ecNumber evidence="1">2.5.1.145</ecNumber>
    </recommendedName>
</protein>
<feature type="chain" id="PRO_1000053394" description="Phosphatidylglycerol--prolipoprotein diacylglyceryl transferase">
    <location>
        <begin position="1"/>
        <end position="281"/>
    </location>
</feature>
<feature type="transmembrane region" description="Helical" evidence="1">
    <location>
        <begin position="23"/>
        <end position="43"/>
    </location>
</feature>
<feature type="transmembrane region" description="Helical" evidence="1">
    <location>
        <begin position="71"/>
        <end position="91"/>
    </location>
</feature>
<feature type="transmembrane region" description="Helical" evidence="1">
    <location>
        <begin position="107"/>
        <end position="127"/>
    </location>
</feature>
<feature type="transmembrane region" description="Helical" evidence="1">
    <location>
        <begin position="133"/>
        <end position="153"/>
    </location>
</feature>
<feature type="transmembrane region" description="Helical" evidence="1">
    <location>
        <begin position="189"/>
        <end position="209"/>
    </location>
</feature>
<feature type="transmembrane region" description="Helical" evidence="1">
    <location>
        <begin position="217"/>
        <end position="237"/>
    </location>
</feature>
<feature type="transmembrane region" description="Helical" evidence="1">
    <location>
        <begin position="247"/>
        <end position="267"/>
    </location>
</feature>
<feature type="binding site" evidence="1">
    <location>
        <position position="154"/>
    </location>
    <ligand>
        <name>a 1,2-diacyl-sn-glycero-3-phospho-(1'-sn-glycerol)</name>
        <dbReference type="ChEBI" id="CHEBI:64716"/>
    </ligand>
</feature>
<gene>
    <name evidence="1" type="primary">lgt</name>
    <name type="ordered locus">BruAb1_1517</name>
</gene>
<reference key="1">
    <citation type="journal article" date="2005" name="J. Bacteriol.">
        <title>Completion of the genome sequence of Brucella abortus and comparison to the highly similar genomes of Brucella melitensis and Brucella suis.</title>
        <authorList>
            <person name="Halling S.M."/>
            <person name="Peterson-Burch B.D."/>
            <person name="Bricker B.J."/>
            <person name="Zuerner R.L."/>
            <person name="Qing Z."/>
            <person name="Li L.-L."/>
            <person name="Kapur V."/>
            <person name="Alt D.P."/>
            <person name="Olsen S.C."/>
        </authorList>
    </citation>
    <scope>NUCLEOTIDE SEQUENCE [LARGE SCALE GENOMIC DNA]</scope>
    <source>
        <strain>9-941</strain>
    </source>
</reference>
<keyword id="KW-0997">Cell inner membrane</keyword>
<keyword id="KW-1003">Cell membrane</keyword>
<keyword id="KW-0472">Membrane</keyword>
<keyword id="KW-0808">Transferase</keyword>
<keyword id="KW-0812">Transmembrane</keyword>
<keyword id="KW-1133">Transmembrane helix</keyword>
<organism>
    <name type="scientific">Brucella abortus biovar 1 (strain 9-941)</name>
    <dbReference type="NCBI Taxonomy" id="262698"/>
    <lineage>
        <taxon>Bacteria</taxon>
        <taxon>Pseudomonadati</taxon>
        <taxon>Pseudomonadota</taxon>
        <taxon>Alphaproteobacteria</taxon>
        <taxon>Hyphomicrobiales</taxon>
        <taxon>Brucellaceae</taxon>
        <taxon>Brucella/Ochrobactrum group</taxon>
        <taxon>Brucella</taxon>
    </lineage>
</organism>
<proteinExistence type="inferred from homology"/>
<comment type="function">
    <text evidence="1">Catalyzes the transfer of the diacylglyceryl group from phosphatidylglycerol to the sulfhydryl group of the N-terminal cysteine of a prolipoprotein, the first step in the formation of mature lipoproteins.</text>
</comment>
<comment type="catalytic activity">
    <reaction evidence="1">
        <text>L-cysteinyl-[prolipoprotein] + a 1,2-diacyl-sn-glycero-3-phospho-(1'-sn-glycerol) = an S-1,2-diacyl-sn-glyceryl-L-cysteinyl-[prolipoprotein] + sn-glycerol 1-phosphate + H(+)</text>
        <dbReference type="Rhea" id="RHEA:56712"/>
        <dbReference type="Rhea" id="RHEA-COMP:14679"/>
        <dbReference type="Rhea" id="RHEA-COMP:14680"/>
        <dbReference type="ChEBI" id="CHEBI:15378"/>
        <dbReference type="ChEBI" id="CHEBI:29950"/>
        <dbReference type="ChEBI" id="CHEBI:57685"/>
        <dbReference type="ChEBI" id="CHEBI:64716"/>
        <dbReference type="ChEBI" id="CHEBI:140658"/>
        <dbReference type="EC" id="2.5.1.145"/>
    </reaction>
</comment>
<comment type="pathway">
    <text evidence="1">Protein modification; lipoprotein biosynthesis (diacylglyceryl transfer).</text>
</comment>
<comment type="subcellular location">
    <subcellularLocation>
        <location evidence="1">Cell inner membrane</location>
        <topology evidence="1">Multi-pass membrane protein</topology>
    </subcellularLocation>
</comment>
<comment type="similarity">
    <text evidence="1">Belongs to the Lgt family.</text>
</comment>